<dbReference type="EMBL" id="AE008384">
    <property type="protein sequence ID" value="AAM31711.1"/>
    <property type="molecule type" value="Genomic_DNA"/>
</dbReference>
<dbReference type="RefSeq" id="WP_011033947.1">
    <property type="nucleotide sequence ID" value="NC_003901.1"/>
</dbReference>
<dbReference type="SMR" id="Q8PVF0"/>
<dbReference type="KEGG" id="mma:MM_2015"/>
<dbReference type="PATRIC" id="fig|192952.21.peg.2317"/>
<dbReference type="eggNOG" id="arCOG04061">
    <property type="taxonomic scope" value="Archaea"/>
</dbReference>
<dbReference type="HOGENOM" id="CLU_146475_1_0_2"/>
<dbReference type="Proteomes" id="UP000000595">
    <property type="component" value="Chromosome"/>
</dbReference>
<dbReference type="GO" id="GO:0003723">
    <property type="term" value="F:RNA binding"/>
    <property type="evidence" value="ECO:0007669"/>
    <property type="project" value="UniProtKB-UniRule"/>
</dbReference>
<dbReference type="GO" id="GO:0015031">
    <property type="term" value="P:protein transport"/>
    <property type="evidence" value="ECO:0007669"/>
    <property type="project" value="UniProtKB-UniRule"/>
</dbReference>
<dbReference type="CDD" id="cd22054">
    <property type="entry name" value="NAC_NACA"/>
    <property type="match status" value="1"/>
</dbReference>
<dbReference type="CDD" id="cd14359">
    <property type="entry name" value="UBA_AeNAC"/>
    <property type="match status" value="1"/>
</dbReference>
<dbReference type="Gene3D" id="1.10.8.10">
    <property type="entry name" value="DNA helicase RuvA subunit, C-terminal domain"/>
    <property type="match status" value="1"/>
</dbReference>
<dbReference type="Gene3D" id="2.20.70.30">
    <property type="entry name" value="Nascent polypeptide-associated complex domain"/>
    <property type="match status" value="1"/>
</dbReference>
<dbReference type="HAMAP" id="MF_00814">
    <property type="entry name" value="NAC_arch"/>
    <property type="match status" value="1"/>
</dbReference>
<dbReference type="InterPro" id="IPR044034">
    <property type="entry name" value="NAC-like_UBA"/>
</dbReference>
<dbReference type="InterPro" id="IPR038187">
    <property type="entry name" value="NAC_A/B_dom_sf"/>
</dbReference>
<dbReference type="InterPro" id="IPR005231">
    <property type="entry name" value="NAC_arc"/>
</dbReference>
<dbReference type="InterPro" id="IPR002715">
    <property type="entry name" value="Nas_poly-pep-assoc_cplx_dom"/>
</dbReference>
<dbReference type="InterPro" id="IPR009060">
    <property type="entry name" value="UBA-like_sf"/>
</dbReference>
<dbReference type="NCBIfam" id="TIGR00264">
    <property type="entry name" value="archaeal-type nascent polypeptide-associated complex protein"/>
    <property type="match status" value="1"/>
</dbReference>
<dbReference type="Pfam" id="PF01849">
    <property type="entry name" value="NAC"/>
    <property type="match status" value="1"/>
</dbReference>
<dbReference type="Pfam" id="PF19026">
    <property type="entry name" value="UBA_HYPK"/>
    <property type="match status" value="1"/>
</dbReference>
<dbReference type="SMART" id="SM01407">
    <property type="entry name" value="NAC"/>
    <property type="match status" value="1"/>
</dbReference>
<dbReference type="SUPFAM" id="SSF46934">
    <property type="entry name" value="UBA-like"/>
    <property type="match status" value="1"/>
</dbReference>
<dbReference type="PROSITE" id="PS51151">
    <property type="entry name" value="NAC_AB"/>
    <property type="match status" value="1"/>
</dbReference>
<sequence length="120" mass="12839">MFPGMGGVGGRGMNPAKMKQMMKQMGIDVKELKDVEEVVIKTADSNIVIENANVTIMTVQGSETYQIVGDVKEVPKSLEIPAEDIKLVMEQTGVSEEEARNALKNSNGDLAEAIVALSSA</sequence>
<comment type="function">
    <text evidence="1">Contacts the emerging nascent chain on the ribosome.</text>
</comment>
<comment type="subunit">
    <text evidence="1">Homodimer. Interacts with the ribosome. Binds ribosomal RNA.</text>
</comment>
<comment type="similarity">
    <text evidence="1">Belongs to the NAC-alpha family.</text>
</comment>
<evidence type="ECO:0000255" key="1">
    <source>
        <dbReference type="HAMAP-Rule" id="MF_00814"/>
    </source>
</evidence>
<proteinExistence type="inferred from homology"/>
<gene>
    <name evidence="1" type="primary">nac</name>
    <name type="ordered locus">MM_2015</name>
</gene>
<feature type="chain" id="PRO_0000135605" description="Nascent polypeptide-associated complex protein">
    <location>
        <begin position="1"/>
        <end position="120"/>
    </location>
</feature>
<feature type="domain" description="NAC-A/B" evidence="1">
    <location>
        <begin position="12"/>
        <end position="80"/>
    </location>
</feature>
<protein>
    <recommendedName>
        <fullName evidence="1">Nascent polypeptide-associated complex protein</fullName>
    </recommendedName>
</protein>
<accession>Q8PVF0</accession>
<name>NAC_METMA</name>
<organism>
    <name type="scientific">Methanosarcina mazei (strain ATCC BAA-159 / DSM 3647 / Goe1 / Go1 / JCM 11833 / OCM 88)</name>
    <name type="common">Methanosarcina frisia</name>
    <dbReference type="NCBI Taxonomy" id="192952"/>
    <lineage>
        <taxon>Archaea</taxon>
        <taxon>Methanobacteriati</taxon>
        <taxon>Methanobacteriota</taxon>
        <taxon>Stenosarchaea group</taxon>
        <taxon>Methanomicrobia</taxon>
        <taxon>Methanosarcinales</taxon>
        <taxon>Methanosarcinaceae</taxon>
        <taxon>Methanosarcina</taxon>
    </lineage>
</organism>
<reference key="1">
    <citation type="journal article" date="2002" name="J. Mol. Microbiol. Biotechnol.">
        <title>The genome of Methanosarcina mazei: evidence for lateral gene transfer between Bacteria and Archaea.</title>
        <authorList>
            <person name="Deppenmeier U."/>
            <person name="Johann A."/>
            <person name="Hartsch T."/>
            <person name="Merkl R."/>
            <person name="Schmitz R.A."/>
            <person name="Martinez-Arias R."/>
            <person name="Henne A."/>
            <person name="Wiezer A."/>
            <person name="Baeumer S."/>
            <person name="Jacobi C."/>
            <person name="Brueggemann H."/>
            <person name="Lienard T."/>
            <person name="Christmann A."/>
            <person name="Boemecke M."/>
            <person name="Steckel S."/>
            <person name="Bhattacharyya A."/>
            <person name="Lykidis A."/>
            <person name="Overbeek R."/>
            <person name="Klenk H.-P."/>
            <person name="Gunsalus R.P."/>
            <person name="Fritz H.-J."/>
            <person name="Gottschalk G."/>
        </authorList>
    </citation>
    <scope>NUCLEOTIDE SEQUENCE [LARGE SCALE GENOMIC DNA]</scope>
    <source>
        <strain>ATCC BAA-159 / DSM 3647 / Goe1 / Go1 / JCM 11833 / OCM 88</strain>
    </source>
</reference>
<keyword id="KW-0653">Protein transport</keyword>
<keyword id="KW-0694">RNA-binding</keyword>
<keyword id="KW-0813">Transport</keyword>